<accession>B3CLC0</accession>
<name>YBEY_WOLPP</name>
<proteinExistence type="inferred from homology"/>
<sequence length="152" mass="17519">MLEVSILDKRWHSITKDPQSFVLNIINASLKELKIDHYKPNISIALADDNLLHQLNLKFREIDKPTNVLSFPCEQLSSECDLGDIAIAVDTIERESHEYCISILTHTAHMLVHGLLHLLGYDHQKEDEEIIMKSLESKILALLEFEKEKYGR</sequence>
<comment type="function">
    <text evidence="1">Single strand-specific metallo-endoribonuclease involved in late-stage 70S ribosome quality control and in maturation of the 3' terminus of the 16S rRNA.</text>
</comment>
<comment type="cofactor">
    <cofactor evidence="1">
        <name>Zn(2+)</name>
        <dbReference type="ChEBI" id="CHEBI:29105"/>
    </cofactor>
    <text evidence="1">Binds 1 zinc ion.</text>
</comment>
<comment type="subcellular location">
    <subcellularLocation>
        <location evidence="1">Cytoplasm</location>
    </subcellularLocation>
</comment>
<comment type="similarity">
    <text evidence="1">Belongs to the endoribonuclease YbeY family.</text>
</comment>
<evidence type="ECO:0000255" key="1">
    <source>
        <dbReference type="HAMAP-Rule" id="MF_00009"/>
    </source>
</evidence>
<organism>
    <name type="scientific">Wolbachia pipientis subsp. Culex pipiens (strain wPip)</name>
    <dbReference type="NCBI Taxonomy" id="570417"/>
    <lineage>
        <taxon>Bacteria</taxon>
        <taxon>Pseudomonadati</taxon>
        <taxon>Pseudomonadota</taxon>
        <taxon>Alphaproteobacteria</taxon>
        <taxon>Rickettsiales</taxon>
        <taxon>Anaplasmataceae</taxon>
        <taxon>Wolbachieae</taxon>
        <taxon>Wolbachia</taxon>
    </lineage>
</organism>
<gene>
    <name evidence="1" type="primary">ybeY</name>
    <name type="ordered locus">WP0579</name>
</gene>
<dbReference type="EC" id="3.1.-.-" evidence="1"/>
<dbReference type="EMBL" id="AM999887">
    <property type="protein sequence ID" value="CAQ54687.1"/>
    <property type="molecule type" value="Genomic_DNA"/>
</dbReference>
<dbReference type="RefSeq" id="WP_007302008.1">
    <property type="nucleotide sequence ID" value="NC_010981.1"/>
</dbReference>
<dbReference type="SMR" id="B3CLC0"/>
<dbReference type="KEGG" id="wpi:WP0579"/>
<dbReference type="eggNOG" id="COG0319">
    <property type="taxonomic scope" value="Bacteria"/>
</dbReference>
<dbReference type="HOGENOM" id="CLU_106710_0_0_5"/>
<dbReference type="Proteomes" id="UP000008814">
    <property type="component" value="Chromosome"/>
</dbReference>
<dbReference type="GO" id="GO:0005737">
    <property type="term" value="C:cytoplasm"/>
    <property type="evidence" value="ECO:0007669"/>
    <property type="project" value="UniProtKB-SubCell"/>
</dbReference>
<dbReference type="GO" id="GO:0004222">
    <property type="term" value="F:metalloendopeptidase activity"/>
    <property type="evidence" value="ECO:0007669"/>
    <property type="project" value="InterPro"/>
</dbReference>
<dbReference type="GO" id="GO:0004521">
    <property type="term" value="F:RNA endonuclease activity"/>
    <property type="evidence" value="ECO:0007669"/>
    <property type="project" value="UniProtKB-UniRule"/>
</dbReference>
<dbReference type="GO" id="GO:0008270">
    <property type="term" value="F:zinc ion binding"/>
    <property type="evidence" value="ECO:0007669"/>
    <property type="project" value="UniProtKB-UniRule"/>
</dbReference>
<dbReference type="GO" id="GO:0006364">
    <property type="term" value="P:rRNA processing"/>
    <property type="evidence" value="ECO:0007669"/>
    <property type="project" value="UniProtKB-UniRule"/>
</dbReference>
<dbReference type="Gene3D" id="3.40.390.30">
    <property type="entry name" value="Metalloproteases ('zincins'), catalytic domain"/>
    <property type="match status" value="1"/>
</dbReference>
<dbReference type="HAMAP" id="MF_00009">
    <property type="entry name" value="Endoribonucl_YbeY"/>
    <property type="match status" value="1"/>
</dbReference>
<dbReference type="InterPro" id="IPR023091">
    <property type="entry name" value="MetalPrtase_cat_dom_sf_prd"/>
</dbReference>
<dbReference type="InterPro" id="IPR002036">
    <property type="entry name" value="YbeY"/>
</dbReference>
<dbReference type="InterPro" id="IPR020549">
    <property type="entry name" value="YbeY_CS"/>
</dbReference>
<dbReference type="NCBIfam" id="TIGR00043">
    <property type="entry name" value="rRNA maturation RNase YbeY"/>
    <property type="match status" value="1"/>
</dbReference>
<dbReference type="PANTHER" id="PTHR46986">
    <property type="entry name" value="ENDORIBONUCLEASE YBEY, CHLOROPLASTIC"/>
    <property type="match status" value="1"/>
</dbReference>
<dbReference type="PANTHER" id="PTHR46986:SF1">
    <property type="entry name" value="ENDORIBONUCLEASE YBEY, CHLOROPLASTIC"/>
    <property type="match status" value="1"/>
</dbReference>
<dbReference type="Pfam" id="PF02130">
    <property type="entry name" value="YbeY"/>
    <property type="match status" value="1"/>
</dbReference>
<dbReference type="SUPFAM" id="SSF55486">
    <property type="entry name" value="Metalloproteases ('zincins'), catalytic domain"/>
    <property type="match status" value="1"/>
</dbReference>
<dbReference type="PROSITE" id="PS01306">
    <property type="entry name" value="UPF0054"/>
    <property type="match status" value="1"/>
</dbReference>
<reference key="1">
    <citation type="journal article" date="2008" name="Mol. Biol. Evol.">
        <title>Genome evolution of Wolbachia strain wPip from the Culex pipiens group.</title>
        <authorList>
            <person name="Klasson L."/>
            <person name="Walker T."/>
            <person name="Sebaihia M."/>
            <person name="Sanders M.J."/>
            <person name="Quail M.A."/>
            <person name="Lord A."/>
            <person name="Sanders S."/>
            <person name="Earl J."/>
            <person name="O'Neill S.L."/>
            <person name="Thomson N."/>
            <person name="Sinkins S.P."/>
            <person name="Parkhill J."/>
        </authorList>
    </citation>
    <scope>NUCLEOTIDE SEQUENCE [LARGE SCALE GENOMIC DNA]</scope>
    <source>
        <strain>wPip</strain>
    </source>
</reference>
<feature type="chain" id="PRO_1000089227" description="Endoribonuclease YbeY">
    <location>
        <begin position="1"/>
        <end position="152"/>
    </location>
</feature>
<feature type="binding site" evidence="1">
    <location>
        <position position="113"/>
    </location>
    <ligand>
        <name>Zn(2+)</name>
        <dbReference type="ChEBI" id="CHEBI:29105"/>
        <note>catalytic</note>
    </ligand>
</feature>
<feature type="binding site" evidence="1">
    <location>
        <position position="117"/>
    </location>
    <ligand>
        <name>Zn(2+)</name>
        <dbReference type="ChEBI" id="CHEBI:29105"/>
        <note>catalytic</note>
    </ligand>
</feature>
<feature type="binding site" evidence="1">
    <location>
        <position position="123"/>
    </location>
    <ligand>
        <name>Zn(2+)</name>
        <dbReference type="ChEBI" id="CHEBI:29105"/>
        <note>catalytic</note>
    </ligand>
</feature>
<keyword id="KW-0963">Cytoplasm</keyword>
<keyword id="KW-0255">Endonuclease</keyword>
<keyword id="KW-0378">Hydrolase</keyword>
<keyword id="KW-0479">Metal-binding</keyword>
<keyword id="KW-0540">Nuclease</keyword>
<keyword id="KW-0690">Ribosome biogenesis</keyword>
<keyword id="KW-0698">rRNA processing</keyword>
<keyword id="KW-0862">Zinc</keyword>
<protein>
    <recommendedName>
        <fullName evidence="1">Endoribonuclease YbeY</fullName>
        <ecNumber evidence="1">3.1.-.-</ecNumber>
    </recommendedName>
</protein>